<gene>
    <name type="primary">mt-cyb</name>
    <name type="synonym">cob</name>
    <name type="synonym">cytb</name>
    <name type="synonym">mtcyb</name>
</gene>
<comment type="function">
    <text evidence="2">Component of the ubiquinol-cytochrome c reductase complex (complex III or cytochrome b-c1 complex) that is part of the mitochondrial respiratory chain. The b-c1 complex mediates electron transfer from ubiquinol to cytochrome c. Contributes to the generation of a proton gradient across the mitochondrial membrane that is then used for ATP synthesis.</text>
</comment>
<comment type="cofactor">
    <cofactor evidence="2">
        <name>heme b</name>
        <dbReference type="ChEBI" id="CHEBI:60344"/>
    </cofactor>
    <text evidence="2">Binds 2 heme b groups non-covalently.</text>
</comment>
<comment type="subunit">
    <text evidence="2">The cytochrome bc1 complex contains 3 respiratory subunits (MT-CYB, CYC1 and UQCRFS1), 2 core proteins (UQCRC1 and UQCRC2) and probably 6 low-molecular weight proteins.</text>
</comment>
<comment type="subcellular location">
    <subcellularLocation>
        <location evidence="2">Mitochondrion inner membrane</location>
        <topology evidence="2">Multi-pass membrane protein</topology>
    </subcellularLocation>
</comment>
<comment type="miscellaneous">
    <text evidence="1">Heme 1 (or BL or b562) is low-potential and absorbs at about 562 nm, and heme 2 (or BH or b566) is high-potential and absorbs at about 566 nm.</text>
</comment>
<comment type="similarity">
    <text evidence="3 4">Belongs to the cytochrome b family.</text>
</comment>
<comment type="caution">
    <text evidence="2">The full-length protein contains only eight transmembrane helices, not nine as predicted by bioinformatics tools.</text>
</comment>
<sequence length="380" mass="42250">MASLRKTHPLLKIANDALVDLPSPANISVWWNFGSLLGLCLASQILTGLFLAMHYTPDVESAFNSVAHICRDVNFGWLIRNMHANGASFFFICLYLHIGRGLYYGSYLFVETWNVGVVLLLLVMMTAFVGYVLPWGQMSFWGATVITNLLSAVPYVGTTLVEWIWGGFSVDNATLTRFFAFHFLFPFVILAAAVLHLLFLHETGSNNPIGLNSNADKISFHPYFTYKDLLGFAVLLMGLTSLALFSPNLLGDPDNFTPANPMVTPPHIKPEWYFLFAYAILRSIPNKLGGVLALLASILILMVVPFLHTSKQRALTFRPASQFLFWTLVADVVVLTWIGGMPAEQPFIIIGQVASVLYFSLFLVLFPLAGWAENKVLGWT</sequence>
<name>CYB_SCOSC</name>
<geneLocation type="mitochondrion"/>
<feature type="chain" id="PRO_0000061531" description="Cytochrome b">
    <location>
        <begin position="1"/>
        <end position="380"/>
    </location>
</feature>
<feature type="transmembrane region" description="Helical" evidence="2">
    <location>
        <begin position="33"/>
        <end position="53"/>
    </location>
</feature>
<feature type="transmembrane region" description="Helical" evidence="2">
    <location>
        <begin position="77"/>
        <end position="98"/>
    </location>
</feature>
<feature type="transmembrane region" description="Helical" evidence="2">
    <location>
        <begin position="113"/>
        <end position="133"/>
    </location>
</feature>
<feature type="transmembrane region" description="Helical" evidence="2">
    <location>
        <begin position="178"/>
        <end position="198"/>
    </location>
</feature>
<feature type="transmembrane region" description="Helical" evidence="2">
    <location>
        <begin position="226"/>
        <end position="246"/>
    </location>
</feature>
<feature type="transmembrane region" description="Helical" evidence="2">
    <location>
        <begin position="288"/>
        <end position="308"/>
    </location>
</feature>
<feature type="transmembrane region" description="Helical" evidence="2">
    <location>
        <begin position="320"/>
        <end position="340"/>
    </location>
</feature>
<feature type="transmembrane region" description="Helical" evidence="2">
    <location>
        <begin position="347"/>
        <end position="367"/>
    </location>
</feature>
<feature type="binding site" description="axial binding residue" evidence="2">
    <location>
        <position position="83"/>
    </location>
    <ligand>
        <name>heme b</name>
        <dbReference type="ChEBI" id="CHEBI:60344"/>
        <label>b562</label>
    </ligand>
    <ligandPart>
        <name>Fe</name>
        <dbReference type="ChEBI" id="CHEBI:18248"/>
    </ligandPart>
</feature>
<feature type="binding site" description="axial binding residue" evidence="2">
    <location>
        <position position="97"/>
    </location>
    <ligand>
        <name>heme b</name>
        <dbReference type="ChEBI" id="CHEBI:60344"/>
        <label>b566</label>
    </ligand>
    <ligandPart>
        <name>Fe</name>
        <dbReference type="ChEBI" id="CHEBI:18248"/>
    </ligandPart>
</feature>
<feature type="binding site" description="axial binding residue" evidence="2">
    <location>
        <position position="182"/>
    </location>
    <ligand>
        <name>heme b</name>
        <dbReference type="ChEBI" id="CHEBI:60344"/>
        <label>b562</label>
    </ligand>
    <ligandPart>
        <name>Fe</name>
        <dbReference type="ChEBI" id="CHEBI:18248"/>
    </ligandPart>
</feature>
<feature type="binding site" description="axial binding residue" evidence="2">
    <location>
        <position position="196"/>
    </location>
    <ligand>
        <name>heme b</name>
        <dbReference type="ChEBI" id="CHEBI:60344"/>
        <label>b566</label>
    </ligand>
    <ligandPart>
        <name>Fe</name>
        <dbReference type="ChEBI" id="CHEBI:18248"/>
    </ligandPart>
</feature>
<feature type="binding site" evidence="2">
    <location>
        <position position="201"/>
    </location>
    <ligand>
        <name>a ubiquinone</name>
        <dbReference type="ChEBI" id="CHEBI:16389"/>
    </ligand>
</feature>
<reference key="1">
    <citation type="journal article" date="1994" name="J. Mol. Evol.">
        <title>Evolutionary analysis of cytochrome b sequences in some Perciformes: evidence for a slower rate of evolution than in mammals.</title>
        <authorList>
            <person name="Cantatore P."/>
            <person name="Roberti M."/>
            <person name="Pesole G."/>
            <person name="Ludovico A."/>
            <person name="Milella F."/>
            <person name="Gadaleta M.N."/>
            <person name="Saccone C."/>
        </authorList>
    </citation>
    <scope>NUCLEOTIDE SEQUENCE [GENOMIC DNA]</scope>
    <source>
        <tissue>Liver</tissue>
    </source>
</reference>
<protein>
    <recommendedName>
        <fullName>Cytochrome b</fullName>
    </recommendedName>
    <alternativeName>
        <fullName>Complex III subunit 3</fullName>
    </alternativeName>
    <alternativeName>
        <fullName>Complex III subunit III</fullName>
    </alternativeName>
    <alternativeName>
        <fullName>Cytochrome b-c1 complex subunit 3</fullName>
    </alternativeName>
    <alternativeName>
        <fullName>Ubiquinol-cytochrome-c reductase complex cytochrome b subunit</fullName>
    </alternativeName>
</protein>
<organism>
    <name type="scientific">Scomber scombrus</name>
    <name type="common">Atlantic mackerel</name>
    <name type="synonym">Scomber vernalis</name>
    <dbReference type="NCBI Taxonomy" id="13677"/>
    <lineage>
        <taxon>Eukaryota</taxon>
        <taxon>Metazoa</taxon>
        <taxon>Chordata</taxon>
        <taxon>Craniata</taxon>
        <taxon>Vertebrata</taxon>
        <taxon>Euteleostomi</taxon>
        <taxon>Actinopterygii</taxon>
        <taxon>Neopterygii</taxon>
        <taxon>Teleostei</taxon>
        <taxon>Neoteleostei</taxon>
        <taxon>Acanthomorphata</taxon>
        <taxon>Pelagiaria</taxon>
        <taxon>Scombriformes</taxon>
        <taxon>Scombridae</taxon>
        <taxon>Scomber</taxon>
    </lineage>
</organism>
<dbReference type="EMBL" id="X81564">
    <property type="protein sequence ID" value="CAA57260.1"/>
    <property type="molecule type" value="Genomic_DNA"/>
</dbReference>
<dbReference type="RefSeq" id="YP_138217.1">
    <property type="nucleotide sequence ID" value="NC_006398.1"/>
</dbReference>
<dbReference type="SMR" id="Q36548"/>
<dbReference type="GeneID" id="3126510"/>
<dbReference type="CTD" id="4519"/>
<dbReference type="GO" id="GO:0005743">
    <property type="term" value="C:mitochondrial inner membrane"/>
    <property type="evidence" value="ECO:0007669"/>
    <property type="project" value="UniProtKB-SubCell"/>
</dbReference>
<dbReference type="GO" id="GO:0045275">
    <property type="term" value="C:respiratory chain complex III"/>
    <property type="evidence" value="ECO:0007669"/>
    <property type="project" value="InterPro"/>
</dbReference>
<dbReference type="GO" id="GO:0046872">
    <property type="term" value="F:metal ion binding"/>
    <property type="evidence" value="ECO:0007669"/>
    <property type="project" value="UniProtKB-KW"/>
</dbReference>
<dbReference type="GO" id="GO:0008121">
    <property type="term" value="F:ubiquinol-cytochrome-c reductase activity"/>
    <property type="evidence" value="ECO:0007669"/>
    <property type="project" value="InterPro"/>
</dbReference>
<dbReference type="GO" id="GO:0006122">
    <property type="term" value="P:mitochondrial electron transport, ubiquinol to cytochrome c"/>
    <property type="evidence" value="ECO:0007669"/>
    <property type="project" value="TreeGrafter"/>
</dbReference>
<dbReference type="CDD" id="cd00290">
    <property type="entry name" value="cytochrome_b_C"/>
    <property type="match status" value="1"/>
</dbReference>
<dbReference type="CDD" id="cd00284">
    <property type="entry name" value="Cytochrome_b_N"/>
    <property type="match status" value="1"/>
</dbReference>
<dbReference type="FunFam" id="1.20.810.10:FF:000002">
    <property type="entry name" value="Cytochrome b"/>
    <property type="match status" value="1"/>
</dbReference>
<dbReference type="Gene3D" id="1.20.810.10">
    <property type="entry name" value="Cytochrome Bc1 Complex, Chain C"/>
    <property type="match status" value="1"/>
</dbReference>
<dbReference type="InterPro" id="IPR005798">
    <property type="entry name" value="Cyt_b/b6_C"/>
</dbReference>
<dbReference type="InterPro" id="IPR036150">
    <property type="entry name" value="Cyt_b/b6_C_sf"/>
</dbReference>
<dbReference type="InterPro" id="IPR005797">
    <property type="entry name" value="Cyt_b/b6_N"/>
</dbReference>
<dbReference type="InterPro" id="IPR027387">
    <property type="entry name" value="Cytb/b6-like_sf"/>
</dbReference>
<dbReference type="InterPro" id="IPR030689">
    <property type="entry name" value="Cytochrome_b"/>
</dbReference>
<dbReference type="InterPro" id="IPR048260">
    <property type="entry name" value="Cytochrome_b_C_euk/bac"/>
</dbReference>
<dbReference type="InterPro" id="IPR048259">
    <property type="entry name" value="Cytochrome_b_N_euk/bac"/>
</dbReference>
<dbReference type="InterPro" id="IPR016174">
    <property type="entry name" value="Di-haem_cyt_TM"/>
</dbReference>
<dbReference type="PANTHER" id="PTHR19271">
    <property type="entry name" value="CYTOCHROME B"/>
    <property type="match status" value="1"/>
</dbReference>
<dbReference type="PANTHER" id="PTHR19271:SF16">
    <property type="entry name" value="CYTOCHROME B"/>
    <property type="match status" value="1"/>
</dbReference>
<dbReference type="Pfam" id="PF00032">
    <property type="entry name" value="Cytochrom_B_C"/>
    <property type="match status" value="1"/>
</dbReference>
<dbReference type="Pfam" id="PF00033">
    <property type="entry name" value="Cytochrome_B"/>
    <property type="match status" value="1"/>
</dbReference>
<dbReference type="PIRSF" id="PIRSF038885">
    <property type="entry name" value="COB"/>
    <property type="match status" value="1"/>
</dbReference>
<dbReference type="SUPFAM" id="SSF81648">
    <property type="entry name" value="a domain/subunit of cytochrome bc1 complex (Ubiquinol-cytochrome c reductase)"/>
    <property type="match status" value="1"/>
</dbReference>
<dbReference type="SUPFAM" id="SSF81342">
    <property type="entry name" value="Transmembrane di-heme cytochromes"/>
    <property type="match status" value="1"/>
</dbReference>
<dbReference type="PROSITE" id="PS51003">
    <property type="entry name" value="CYTB_CTER"/>
    <property type="match status" value="1"/>
</dbReference>
<dbReference type="PROSITE" id="PS51002">
    <property type="entry name" value="CYTB_NTER"/>
    <property type="match status" value="1"/>
</dbReference>
<keyword id="KW-0249">Electron transport</keyword>
<keyword id="KW-0349">Heme</keyword>
<keyword id="KW-0408">Iron</keyword>
<keyword id="KW-0472">Membrane</keyword>
<keyword id="KW-0479">Metal-binding</keyword>
<keyword id="KW-0496">Mitochondrion</keyword>
<keyword id="KW-0999">Mitochondrion inner membrane</keyword>
<keyword id="KW-0679">Respiratory chain</keyword>
<keyword id="KW-0812">Transmembrane</keyword>
<keyword id="KW-1133">Transmembrane helix</keyword>
<keyword id="KW-0813">Transport</keyword>
<keyword id="KW-0830">Ubiquinone</keyword>
<evidence type="ECO:0000250" key="1"/>
<evidence type="ECO:0000250" key="2">
    <source>
        <dbReference type="UniProtKB" id="P00157"/>
    </source>
</evidence>
<evidence type="ECO:0000255" key="3">
    <source>
        <dbReference type="PROSITE-ProRule" id="PRU00967"/>
    </source>
</evidence>
<evidence type="ECO:0000255" key="4">
    <source>
        <dbReference type="PROSITE-ProRule" id="PRU00968"/>
    </source>
</evidence>
<proteinExistence type="inferred from homology"/>
<accession>Q36548</accession>